<protein>
    <recommendedName>
        <fullName>Elongation factor 1-delta 1</fullName>
        <shortName>EF-1-delta 1</shortName>
    </recommendedName>
    <alternativeName>
        <fullName>Elongation factor 1B-beta 1</fullName>
    </alternativeName>
    <alternativeName>
        <fullName>eEF-1B beta 1</fullName>
    </alternativeName>
</protein>
<comment type="function">
    <text>EF-1-beta and EF-1-delta stimulate the exchange of GDP bound to EF-1-alpha to GTP.</text>
</comment>
<comment type="subunit">
    <text evidence="1">EF-1 is composed of 4 subunits: alpha, beta (1B-alpha=beta'), delta (1B-beta), and gamma (1B-gamma).</text>
</comment>
<comment type="alternative products">
    <event type="alternative splicing"/>
    <isoform>
        <id>P48006-1</id>
        <name>1</name>
        <sequence type="displayed"/>
    </isoform>
    <text>A number of isoforms are produced. According to EST sequences.</text>
</comment>
<comment type="similarity">
    <text evidence="3">Belongs to the EF-1-beta/EF-1-delta family.</text>
</comment>
<comment type="sequence caution" evidence="3">
    <conflict type="erroneous gene model prediction">
        <sequence resource="EMBL-CDS" id="AAG50564"/>
    </conflict>
</comment>
<gene>
    <name type="ordered locus">At1g30230</name>
    <name type="ORF">F12P21.12</name>
</gene>
<accession>P48006</accession>
<accession>Q0WWW7</accession>
<keyword id="KW-0007">Acetylation</keyword>
<keyword id="KW-0025">Alternative splicing</keyword>
<keyword id="KW-0251">Elongation factor</keyword>
<keyword id="KW-0648">Protein biosynthesis</keyword>
<keyword id="KW-1185">Reference proteome</keyword>
<name>EF1D1_ARATH</name>
<reference key="1">
    <citation type="journal article" date="1996" name="Gene">
        <title>The first intron of the Arabidopsis thaliana gene coding for elongation factor 1 beta contains an enhancer-like element.</title>
        <authorList>
            <person name="Gidekel M."/>
            <person name="Jimenez B."/>
            <person name="Herrera-Estrella L."/>
        </authorList>
    </citation>
    <scope>NUCLEOTIDE SEQUENCE [GENOMIC DNA]</scope>
    <source>
        <strain>cv. Columbia</strain>
        <tissue>Leaf</tissue>
    </source>
</reference>
<reference key="2">
    <citation type="journal article" date="2000" name="Nature">
        <title>Sequence and analysis of chromosome 1 of the plant Arabidopsis thaliana.</title>
        <authorList>
            <person name="Theologis A."/>
            <person name="Ecker J.R."/>
            <person name="Palm C.J."/>
            <person name="Federspiel N.A."/>
            <person name="Kaul S."/>
            <person name="White O."/>
            <person name="Alonso J."/>
            <person name="Altafi H."/>
            <person name="Araujo R."/>
            <person name="Bowman C.L."/>
            <person name="Brooks S.Y."/>
            <person name="Buehler E."/>
            <person name="Chan A."/>
            <person name="Chao Q."/>
            <person name="Chen H."/>
            <person name="Cheuk R.F."/>
            <person name="Chin C.W."/>
            <person name="Chung M.K."/>
            <person name="Conn L."/>
            <person name="Conway A.B."/>
            <person name="Conway A.R."/>
            <person name="Creasy T.H."/>
            <person name="Dewar K."/>
            <person name="Dunn P."/>
            <person name="Etgu P."/>
            <person name="Feldblyum T.V."/>
            <person name="Feng J.-D."/>
            <person name="Fong B."/>
            <person name="Fujii C.Y."/>
            <person name="Gill J.E."/>
            <person name="Goldsmith A.D."/>
            <person name="Haas B."/>
            <person name="Hansen N.F."/>
            <person name="Hughes B."/>
            <person name="Huizar L."/>
            <person name="Hunter J.L."/>
            <person name="Jenkins J."/>
            <person name="Johnson-Hopson C."/>
            <person name="Khan S."/>
            <person name="Khaykin E."/>
            <person name="Kim C.J."/>
            <person name="Koo H.L."/>
            <person name="Kremenetskaia I."/>
            <person name="Kurtz D.B."/>
            <person name="Kwan A."/>
            <person name="Lam B."/>
            <person name="Langin-Hooper S."/>
            <person name="Lee A."/>
            <person name="Lee J.M."/>
            <person name="Lenz C.A."/>
            <person name="Li J.H."/>
            <person name="Li Y.-P."/>
            <person name="Lin X."/>
            <person name="Liu S.X."/>
            <person name="Liu Z.A."/>
            <person name="Luros J.S."/>
            <person name="Maiti R."/>
            <person name="Marziali A."/>
            <person name="Militscher J."/>
            <person name="Miranda M."/>
            <person name="Nguyen M."/>
            <person name="Nierman W.C."/>
            <person name="Osborne B.I."/>
            <person name="Pai G."/>
            <person name="Peterson J."/>
            <person name="Pham P.K."/>
            <person name="Rizzo M."/>
            <person name="Rooney T."/>
            <person name="Rowley D."/>
            <person name="Sakano H."/>
            <person name="Salzberg S.L."/>
            <person name="Schwartz J.R."/>
            <person name="Shinn P."/>
            <person name="Southwick A.M."/>
            <person name="Sun H."/>
            <person name="Tallon L.J."/>
            <person name="Tambunga G."/>
            <person name="Toriumi M.J."/>
            <person name="Town C.D."/>
            <person name="Utterback T."/>
            <person name="Van Aken S."/>
            <person name="Vaysberg M."/>
            <person name="Vysotskaia V.S."/>
            <person name="Walker M."/>
            <person name="Wu D."/>
            <person name="Yu G."/>
            <person name="Fraser C.M."/>
            <person name="Venter J.C."/>
            <person name="Davis R.W."/>
        </authorList>
    </citation>
    <scope>NUCLEOTIDE SEQUENCE [LARGE SCALE GENOMIC DNA]</scope>
    <source>
        <strain>cv. Columbia</strain>
    </source>
</reference>
<reference key="3">
    <citation type="journal article" date="2017" name="Plant J.">
        <title>Araport11: a complete reannotation of the Arabidopsis thaliana reference genome.</title>
        <authorList>
            <person name="Cheng C.Y."/>
            <person name="Krishnakumar V."/>
            <person name="Chan A.P."/>
            <person name="Thibaud-Nissen F."/>
            <person name="Schobel S."/>
            <person name="Town C.D."/>
        </authorList>
    </citation>
    <scope>GENOME REANNOTATION</scope>
    <source>
        <strain>cv. Columbia</strain>
    </source>
</reference>
<reference key="4">
    <citation type="submission" date="2006-07" db="EMBL/GenBank/DDBJ databases">
        <title>Large-scale analysis of RIKEN Arabidopsis full-length (RAFL) cDNAs.</title>
        <authorList>
            <person name="Totoki Y."/>
            <person name="Seki M."/>
            <person name="Ishida J."/>
            <person name="Nakajima M."/>
            <person name="Enju A."/>
            <person name="Kamiya A."/>
            <person name="Narusaka M."/>
            <person name="Shin-i T."/>
            <person name="Nakagawa M."/>
            <person name="Sakamoto N."/>
            <person name="Oishi K."/>
            <person name="Kohara Y."/>
            <person name="Kobayashi M."/>
            <person name="Toyoda A."/>
            <person name="Sakaki Y."/>
            <person name="Sakurai T."/>
            <person name="Iida K."/>
            <person name="Akiyama K."/>
            <person name="Satou M."/>
            <person name="Toyoda T."/>
            <person name="Konagaya A."/>
            <person name="Carninci P."/>
            <person name="Kawai J."/>
            <person name="Hayashizaki Y."/>
            <person name="Shinozaki K."/>
        </authorList>
    </citation>
    <scope>NUCLEOTIDE SEQUENCE [LARGE SCALE MRNA]</scope>
    <source>
        <strain>cv. Columbia</strain>
    </source>
</reference>
<reference key="5">
    <citation type="journal article" date="2009" name="J. Proteomics">
        <title>Phosphoproteomic analysis of nuclei-enriched fractions from Arabidopsis thaliana.</title>
        <authorList>
            <person name="Jones A.M.E."/>
            <person name="MacLean D."/>
            <person name="Studholme D.J."/>
            <person name="Serna-Sanz A."/>
            <person name="Andreasson E."/>
            <person name="Rathjen J.P."/>
            <person name="Peck S.C."/>
        </authorList>
    </citation>
    <scope>IDENTIFICATION BY MASS SPECTROMETRY [LARGE SCALE ANALYSIS]</scope>
    <source>
        <strain>cv. Columbia</strain>
    </source>
</reference>
<reference key="6">
    <citation type="journal article" date="2012" name="Mol. Cell. Proteomics">
        <title>Comparative large-scale characterisation of plant vs. mammal proteins reveals similar and idiosyncratic N-alpha acetylation features.</title>
        <authorList>
            <person name="Bienvenut W.V."/>
            <person name="Sumpton D."/>
            <person name="Martinez A."/>
            <person name="Lilla S."/>
            <person name="Espagne C."/>
            <person name="Meinnel T."/>
            <person name="Giglione C."/>
        </authorList>
    </citation>
    <scope>ACETYLATION [LARGE SCALE ANALYSIS] AT ALA-2</scope>
    <scope>CLEAVAGE OF INITIATOR METHIONINE [LARGE SCALE ANALYSIS]</scope>
    <scope>IDENTIFICATION BY MASS SPECTROMETRY [LARGE SCALE ANALYSIS]</scope>
</reference>
<proteinExistence type="evidence at protein level"/>
<sequence length="231" mass="25132">MAAFPNLNSDAGLKKLDEHLLTRSYITGYQASKDDITVFAALAKPPTSQYVNASRWYNHIDALLRISGVSAEGSGVIVEGSAPITEEAVATPPAADSKDAAADEEDDDDVDLFGEETEEEKKAAEERAASVKASTKKKESGKSSVLIDIKPWDDETDMKKLEEAVKSIQMEGLFWGASKLVPVGYGIKKLQILCTIVDDLVSIDTMIEEQLTVEPINEYVQSCDIVAFNKI</sequence>
<feature type="initiator methionine" description="Removed" evidence="4">
    <location>
        <position position="1"/>
    </location>
</feature>
<feature type="chain" id="PRO_0000155035" description="Elongation factor 1-delta 1">
    <location>
        <begin position="2"/>
        <end position="231"/>
    </location>
</feature>
<feature type="domain" description="GST C-terminal">
    <location>
        <begin position="10"/>
        <end position="73"/>
    </location>
</feature>
<feature type="region of interest" description="Disordered" evidence="2">
    <location>
        <begin position="85"/>
        <end position="108"/>
    </location>
</feature>
<feature type="region of interest" description="Disordered" evidence="2">
    <location>
        <begin position="116"/>
        <end position="135"/>
    </location>
</feature>
<feature type="compositionally biased region" description="Basic and acidic residues" evidence="2">
    <location>
        <begin position="119"/>
        <end position="129"/>
    </location>
</feature>
<feature type="modified residue" description="N-acetylalanine" evidence="4">
    <location>
        <position position="2"/>
    </location>
</feature>
<feature type="sequence conflict" description="In Ref. 1; CAA52751." evidence="3" ref="1">
    <original>A</original>
    <variation>P</variation>
    <location>
        <position position="102"/>
    </location>
</feature>
<feature type="sequence conflict" description="In Ref. 1; CAA52751." evidence="3" ref="1">
    <original>E</original>
    <variation>Q</variation>
    <location>
        <position position="115"/>
    </location>
</feature>
<feature type="sequence conflict" description="In Ref. 1; CAA52751." evidence="3" ref="1">
    <original>L</original>
    <variation>R</variation>
    <location>
        <position position="161"/>
    </location>
</feature>
<evidence type="ECO:0000250" key="1"/>
<evidence type="ECO:0000256" key="2">
    <source>
        <dbReference type="SAM" id="MobiDB-lite"/>
    </source>
</evidence>
<evidence type="ECO:0000305" key="3"/>
<evidence type="ECO:0007744" key="4">
    <source>
    </source>
</evidence>
<organism>
    <name type="scientific">Arabidopsis thaliana</name>
    <name type="common">Mouse-ear cress</name>
    <dbReference type="NCBI Taxonomy" id="3702"/>
    <lineage>
        <taxon>Eukaryota</taxon>
        <taxon>Viridiplantae</taxon>
        <taxon>Streptophyta</taxon>
        <taxon>Embryophyta</taxon>
        <taxon>Tracheophyta</taxon>
        <taxon>Spermatophyta</taxon>
        <taxon>Magnoliopsida</taxon>
        <taxon>eudicotyledons</taxon>
        <taxon>Gunneridae</taxon>
        <taxon>Pentapetalae</taxon>
        <taxon>rosids</taxon>
        <taxon>malvids</taxon>
        <taxon>Brassicales</taxon>
        <taxon>Brassicaceae</taxon>
        <taxon>Camelineae</taxon>
        <taxon>Arabidopsis</taxon>
    </lineage>
</organism>
<dbReference type="EMBL" id="X74733">
    <property type="protein sequence ID" value="CAA52751.1"/>
    <property type="molecule type" value="Genomic_DNA"/>
</dbReference>
<dbReference type="EMBL" id="AC073506">
    <property type="protein sequence ID" value="AAG50564.1"/>
    <property type="status" value="ALT_SEQ"/>
    <property type="molecule type" value="Genomic_DNA"/>
</dbReference>
<dbReference type="EMBL" id="CP002684">
    <property type="protein sequence ID" value="AEE31195.1"/>
    <property type="molecule type" value="Genomic_DNA"/>
</dbReference>
<dbReference type="EMBL" id="AK226216">
    <property type="protein sequence ID" value="BAE98381.1"/>
    <property type="molecule type" value="mRNA"/>
</dbReference>
<dbReference type="PIR" id="S37103">
    <property type="entry name" value="S37103"/>
</dbReference>
<dbReference type="RefSeq" id="NP_174314.2">
    <molecule id="P48006-1"/>
    <property type="nucleotide sequence ID" value="NM_102762.5"/>
</dbReference>
<dbReference type="SMR" id="P48006"/>
<dbReference type="BioGRID" id="25138">
    <property type="interactions" value="7"/>
</dbReference>
<dbReference type="FunCoup" id="P48006">
    <property type="interactions" value="3989"/>
</dbReference>
<dbReference type="STRING" id="3702.P48006"/>
<dbReference type="iPTMnet" id="P48006"/>
<dbReference type="PaxDb" id="3702-AT1G30230.2"/>
<dbReference type="EnsemblPlants" id="AT1G30230.1">
    <molecule id="P48006-1"/>
    <property type="protein sequence ID" value="AT1G30230.1"/>
    <property type="gene ID" value="AT1G30230"/>
</dbReference>
<dbReference type="GeneID" id="839903"/>
<dbReference type="Gramene" id="AT1G30230.1">
    <molecule id="P48006-1"/>
    <property type="protein sequence ID" value="AT1G30230.1"/>
    <property type="gene ID" value="AT1G30230"/>
</dbReference>
<dbReference type="KEGG" id="ath:AT1G30230"/>
<dbReference type="Araport" id="AT1G30230"/>
<dbReference type="TAIR" id="AT1G30230">
    <property type="gene designation" value="EEF-1BB1"/>
</dbReference>
<dbReference type="eggNOG" id="KOG1668">
    <property type="taxonomic scope" value="Eukaryota"/>
</dbReference>
<dbReference type="HOGENOM" id="CLU_050172_3_0_1"/>
<dbReference type="InParanoid" id="P48006"/>
<dbReference type="OMA" id="MPSQADM"/>
<dbReference type="PhylomeDB" id="P48006"/>
<dbReference type="CD-CODE" id="4299E36E">
    <property type="entry name" value="Nucleolus"/>
</dbReference>
<dbReference type="PRO" id="PR:P48006"/>
<dbReference type="Proteomes" id="UP000006548">
    <property type="component" value="Chromosome 1"/>
</dbReference>
<dbReference type="ExpressionAtlas" id="P48006">
    <property type="expression patterns" value="baseline and differential"/>
</dbReference>
<dbReference type="GO" id="GO:0005853">
    <property type="term" value="C:eukaryotic translation elongation factor 1 complex"/>
    <property type="evidence" value="ECO:0007669"/>
    <property type="project" value="InterPro"/>
</dbReference>
<dbReference type="GO" id="GO:0003746">
    <property type="term" value="F:translation elongation factor activity"/>
    <property type="evidence" value="ECO:0007669"/>
    <property type="project" value="UniProtKB-KW"/>
</dbReference>
<dbReference type="CDD" id="cd00292">
    <property type="entry name" value="EF1B"/>
    <property type="match status" value="1"/>
</dbReference>
<dbReference type="FunFam" id="3.30.70.60:FF:000001">
    <property type="entry name" value="Elongation factor 1-beta 1 like"/>
    <property type="match status" value="1"/>
</dbReference>
<dbReference type="FunFam" id="1.20.1050.130:FF:000006">
    <property type="entry name" value="Elongation factor 1-delta 1"/>
    <property type="match status" value="1"/>
</dbReference>
<dbReference type="Gene3D" id="1.20.1050.130">
    <property type="match status" value="1"/>
</dbReference>
<dbReference type="Gene3D" id="3.30.70.60">
    <property type="match status" value="1"/>
</dbReference>
<dbReference type="InterPro" id="IPR036219">
    <property type="entry name" value="eEF-1beta-like_sf"/>
</dbReference>
<dbReference type="InterPro" id="IPR049720">
    <property type="entry name" value="EF1B_bsu/dsu"/>
</dbReference>
<dbReference type="InterPro" id="IPR014038">
    <property type="entry name" value="EF1B_bsu/dsu_GNE"/>
</dbReference>
<dbReference type="InterPro" id="IPR036282">
    <property type="entry name" value="Glutathione-S-Trfase_C_sf"/>
</dbReference>
<dbReference type="InterPro" id="IPR014717">
    <property type="entry name" value="Transl_elong_EF1B/ribsomal_bS6"/>
</dbReference>
<dbReference type="InterPro" id="IPR001326">
    <property type="entry name" value="Transl_elong_EF1B_B/D_CS"/>
</dbReference>
<dbReference type="PANTHER" id="PTHR11595">
    <property type="entry name" value="EF-HAND AND COILED-COIL DOMAIN-CONTAINING FAMILY MEMBER"/>
    <property type="match status" value="1"/>
</dbReference>
<dbReference type="PANTHER" id="PTHR11595:SF21">
    <property type="entry name" value="ELONGATION FACTOR 1-BETA"/>
    <property type="match status" value="1"/>
</dbReference>
<dbReference type="Pfam" id="PF00736">
    <property type="entry name" value="EF1_GNE"/>
    <property type="match status" value="1"/>
</dbReference>
<dbReference type="SMART" id="SM00888">
    <property type="entry name" value="EF1_GNE"/>
    <property type="match status" value="1"/>
</dbReference>
<dbReference type="SUPFAM" id="SSF54984">
    <property type="entry name" value="eEF-1beta-like"/>
    <property type="match status" value="1"/>
</dbReference>
<dbReference type="SUPFAM" id="SSF47616">
    <property type="entry name" value="GST C-terminal domain-like"/>
    <property type="match status" value="1"/>
</dbReference>
<dbReference type="PROSITE" id="PS00824">
    <property type="entry name" value="EF1BD_1"/>
    <property type="match status" value="1"/>
</dbReference>
<dbReference type="PROSITE" id="PS00825">
    <property type="entry name" value="EF1BD_2"/>
    <property type="match status" value="1"/>
</dbReference>